<reference key="1">
    <citation type="journal article" date="2009" name="BMC Genomics">
        <title>Analysis of the Rickettsia africae genome reveals that virulence acquisition in Rickettsia species may be explained by genome reduction.</title>
        <authorList>
            <person name="Fournier P.-E."/>
            <person name="El Karkouri K."/>
            <person name="Leroy Q."/>
            <person name="Robert C."/>
            <person name="Giumelli B."/>
            <person name="Renesto P."/>
            <person name="Socolovschi C."/>
            <person name="Parola P."/>
            <person name="Audic S."/>
            <person name="Raoult D."/>
        </authorList>
    </citation>
    <scope>NUCLEOTIDE SEQUENCE [LARGE SCALE GENOMIC DNA]</scope>
    <source>
        <strain>ESF-5</strain>
    </source>
</reference>
<protein>
    <recommendedName>
        <fullName evidence="1">tRNA uridine(34) hydroxylase</fullName>
        <ecNumber evidence="1">1.14.-.-</ecNumber>
    </recommendedName>
    <alternativeName>
        <fullName evidence="1">tRNA hydroxylation protein O</fullName>
    </alternativeName>
</protein>
<keyword id="KW-0560">Oxidoreductase</keyword>
<keyword id="KW-0819">tRNA processing</keyword>
<comment type="function">
    <text evidence="1">Catalyzes oxygen-dependent 5-hydroxyuridine (ho5U) modification at position 34 in tRNAs.</text>
</comment>
<comment type="catalytic activity">
    <reaction evidence="1">
        <text>uridine(34) in tRNA + AH2 + O2 = 5-hydroxyuridine(34) in tRNA + A + H2O</text>
        <dbReference type="Rhea" id="RHEA:64224"/>
        <dbReference type="Rhea" id="RHEA-COMP:11727"/>
        <dbReference type="Rhea" id="RHEA-COMP:13381"/>
        <dbReference type="ChEBI" id="CHEBI:13193"/>
        <dbReference type="ChEBI" id="CHEBI:15377"/>
        <dbReference type="ChEBI" id="CHEBI:15379"/>
        <dbReference type="ChEBI" id="CHEBI:17499"/>
        <dbReference type="ChEBI" id="CHEBI:65315"/>
        <dbReference type="ChEBI" id="CHEBI:136877"/>
    </reaction>
</comment>
<comment type="similarity">
    <text evidence="1">Belongs to the TrhO family.</text>
</comment>
<name>TRHO_RICAE</name>
<gene>
    <name evidence="1" type="primary">trhO</name>
    <name type="ordered locus">RAF_ORF0156</name>
</gene>
<organism>
    <name type="scientific">Rickettsia africae (strain ESF-5)</name>
    <dbReference type="NCBI Taxonomy" id="347255"/>
    <lineage>
        <taxon>Bacteria</taxon>
        <taxon>Pseudomonadati</taxon>
        <taxon>Pseudomonadota</taxon>
        <taxon>Alphaproteobacteria</taxon>
        <taxon>Rickettsiales</taxon>
        <taxon>Rickettsiaceae</taxon>
        <taxon>Rickettsieae</taxon>
        <taxon>Rickettsia</taxon>
        <taxon>spotted fever group</taxon>
    </lineage>
</organism>
<proteinExistence type="inferred from homology"/>
<sequence length="247" mass="28294">MNEKIAILSAYSFVNIEEPANLIPKLLLIGKRKYVRGTILLANEGFNGSFSGSYENVNLVLEELIKLTGPKDVNVKINYSDVHPFQKLKVRLKKEIVAMNVDGLNVDLFKGEYIEPKDWDEFITKQDVIVIDTRNDYEVEVGTFKSAVNPNTKTFKQFPAWVQQNQELLKGKKIAMVCTGGIRCEKSTSLLKSIGYDEVYHLKGGILQYLEDTQNKNNLWQGECFVFDDRRAVTDDLSPVERHWLQR</sequence>
<feature type="chain" id="PRO_1000206341" description="tRNA uridine(34) hydroxylase">
    <location>
        <begin position="1"/>
        <end position="247"/>
    </location>
</feature>
<feature type="domain" description="Rhodanese" evidence="1">
    <location>
        <begin position="124"/>
        <end position="218"/>
    </location>
</feature>
<feature type="active site" description="Cysteine persulfide intermediate" evidence="1">
    <location>
        <position position="178"/>
    </location>
</feature>
<dbReference type="EC" id="1.14.-.-" evidence="1"/>
<dbReference type="EMBL" id="CP001612">
    <property type="protein sequence ID" value="ACP53123.1"/>
    <property type="molecule type" value="Genomic_DNA"/>
</dbReference>
<dbReference type="RefSeq" id="WP_012719406.1">
    <property type="nucleotide sequence ID" value="NC_012633.1"/>
</dbReference>
<dbReference type="SMR" id="C3PMG3"/>
<dbReference type="KEGG" id="raf:RAF_ORF0156"/>
<dbReference type="HOGENOM" id="CLU_038878_0_1_5"/>
<dbReference type="Proteomes" id="UP000002305">
    <property type="component" value="Chromosome"/>
</dbReference>
<dbReference type="GO" id="GO:0016705">
    <property type="term" value="F:oxidoreductase activity, acting on paired donors, with incorporation or reduction of molecular oxygen"/>
    <property type="evidence" value="ECO:0007669"/>
    <property type="project" value="UniProtKB-UniRule"/>
</dbReference>
<dbReference type="GO" id="GO:0006400">
    <property type="term" value="P:tRNA modification"/>
    <property type="evidence" value="ECO:0007669"/>
    <property type="project" value="UniProtKB-UniRule"/>
</dbReference>
<dbReference type="CDD" id="cd01518">
    <property type="entry name" value="RHOD_YceA"/>
    <property type="match status" value="1"/>
</dbReference>
<dbReference type="Gene3D" id="3.30.70.100">
    <property type="match status" value="1"/>
</dbReference>
<dbReference type="Gene3D" id="3.40.250.10">
    <property type="entry name" value="Rhodanese-like domain"/>
    <property type="match status" value="1"/>
</dbReference>
<dbReference type="HAMAP" id="MF_00469">
    <property type="entry name" value="TrhO"/>
    <property type="match status" value="1"/>
</dbReference>
<dbReference type="InterPro" id="IPR001763">
    <property type="entry name" value="Rhodanese-like_dom"/>
</dbReference>
<dbReference type="InterPro" id="IPR036873">
    <property type="entry name" value="Rhodanese-like_dom_sf"/>
</dbReference>
<dbReference type="InterPro" id="IPR020936">
    <property type="entry name" value="TrhO"/>
</dbReference>
<dbReference type="InterPro" id="IPR040503">
    <property type="entry name" value="TRHO_N"/>
</dbReference>
<dbReference type="NCBIfam" id="NF002397">
    <property type="entry name" value="PRK01415.1"/>
    <property type="match status" value="1"/>
</dbReference>
<dbReference type="PANTHER" id="PTHR43268:SF3">
    <property type="entry name" value="RHODANESE-LIKE DOMAIN-CONTAINING PROTEIN 7-RELATED"/>
    <property type="match status" value="1"/>
</dbReference>
<dbReference type="PANTHER" id="PTHR43268">
    <property type="entry name" value="THIOSULFATE SULFURTRANSFERASE/RHODANESE-LIKE DOMAIN-CONTAINING PROTEIN 2"/>
    <property type="match status" value="1"/>
</dbReference>
<dbReference type="Pfam" id="PF00581">
    <property type="entry name" value="Rhodanese"/>
    <property type="match status" value="1"/>
</dbReference>
<dbReference type="Pfam" id="PF17773">
    <property type="entry name" value="UPF0176_N"/>
    <property type="match status" value="1"/>
</dbReference>
<dbReference type="SMART" id="SM00450">
    <property type="entry name" value="RHOD"/>
    <property type="match status" value="1"/>
</dbReference>
<dbReference type="SUPFAM" id="SSF52821">
    <property type="entry name" value="Rhodanese/Cell cycle control phosphatase"/>
    <property type="match status" value="1"/>
</dbReference>
<dbReference type="PROSITE" id="PS50206">
    <property type="entry name" value="RHODANESE_3"/>
    <property type="match status" value="1"/>
</dbReference>
<evidence type="ECO:0000255" key="1">
    <source>
        <dbReference type="HAMAP-Rule" id="MF_00469"/>
    </source>
</evidence>
<accession>C3PMG3</accession>